<organism>
    <name type="scientific">Salmonella paratyphi A (strain AKU_12601)</name>
    <dbReference type="NCBI Taxonomy" id="554290"/>
    <lineage>
        <taxon>Bacteria</taxon>
        <taxon>Pseudomonadati</taxon>
        <taxon>Pseudomonadota</taxon>
        <taxon>Gammaproteobacteria</taxon>
        <taxon>Enterobacterales</taxon>
        <taxon>Enterobacteriaceae</taxon>
        <taxon>Salmonella</taxon>
    </lineage>
</organism>
<proteinExistence type="inferred from homology"/>
<name>YBJQ_SALPK</name>
<comment type="similarity">
    <text evidence="1">Belongs to the UPF0145 family.</text>
</comment>
<feature type="chain" id="PRO_1000120015" description="UPF0145 protein YbjQ">
    <location>
        <begin position="1"/>
        <end position="107"/>
    </location>
</feature>
<dbReference type="EMBL" id="FM200053">
    <property type="protein sequence ID" value="CAR59933.1"/>
    <property type="molecule type" value="Genomic_DNA"/>
</dbReference>
<dbReference type="RefSeq" id="WP_001160725.1">
    <property type="nucleotide sequence ID" value="NC_011147.1"/>
</dbReference>
<dbReference type="SMR" id="B5BBU4"/>
<dbReference type="KEGG" id="sek:SSPA1739"/>
<dbReference type="HOGENOM" id="CLU_117144_3_0_6"/>
<dbReference type="Proteomes" id="UP000001869">
    <property type="component" value="Chromosome"/>
</dbReference>
<dbReference type="Gene3D" id="3.30.110.70">
    <property type="entry name" value="Hypothetical protein apc22750. Chain B"/>
    <property type="match status" value="1"/>
</dbReference>
<dbReference type="HAMAP" id="MF_00338">
    <property type="entry name" value="UPF0145"/>
    <property type="match status" value="1"/>
</dbReference>
<dbReference type="InterPro" id="IPR035439">
    <property type="entry name" value="UPF0145_dom_sf"/>
</dbReference>
<dbReference type="InterPro" id="IPR002765">
    <property type="entry name" value="UPF0145_YbjQ-like"/>
</dbReference>
<dbReference type="NCBIfam" id="NF002776">
    <property type="entry name" value="PRK02877.1"/>
    <property type="match status" value="1"/>
</dbReference>
<dbReference type="PANTHER" id="PTHR34068">
    <property type="entry name" value="UPF0145 PROTEIN YBJQ"/>
    <property type="match status" value="1"/>
</dbReference>
<dbReference type="PANTHER" id="PTHR34068:SF1">
    <property type="entry name" value="UPF0145 PROTEIN YBJQ"/>
    <property type="match status" value="1"/>
</dbReference>
<dbReference type="Pfam" id="PF01906">
    <property type="entry name" value="YbjQ_1"/>
    <property type="match status" value="1"/>
</dbReference>
<dbReference type="SUPFAM" id="SSF117782">
    <property type="entry name" value="YbjQ-like"/>
    <property type="match status" value="1"/>
</dbReference>
<accession>B5BBU4</accession>
<evidence type="ECO:0000255" key="1">
    <source>
        <dbReference type="HAMAP-Rule" id="MF_00338"/>
    </source>
</evidence>
<protein>
    <recommendedName>
        <fullName evidence="1">UPF0145 protein YbjQ</fullName>
    </recommendedName>
</protein>
<gene>
    <name evidence="1" type="primary">ybjQ</name>
    <name type="ordered locus">SSPA1739</name>
</gene>
<sequence>MQFSTTPTLEGQSIVEYCGVVTGEAILGANIFRDFFAGIRDIVGGRSGAYEKELRKAREIAFQELGEQAKALGADAVVGIDIDYETVGKDGSMLMVSVSGTAVKTRR</sequence>
<reference key="1">
    <citation type="journal article" date="2009" name="BMC Genomics">
        <title>Pseudogene accumulation in the evolutionary histories of Salmonella enterica serovars Paratyphi A and Typhi.</title>
        <authorList>
            <person name="Holt K.E."/>
            <person name="Thomson N.R."/>
            <person name="Wain J."/>
            <person name="Langridge G.C."/>
            <person name="Hasan R."/>
            <person name="Bhutta Z.A."/>
            <person name="Quail M.A."/>
            <person name="Norbertczak H."/>
            <person name="Walker D."/>
            <person name="Simmonds M."/>
            <person name="White B."/>
            <person name="Bason N."/>
            <person name="Mungall K."/>
            <person name="Dougan G."/>
            <person name="Parkhill J."/>
        </authorList>
    </citation>
    <scope>NUCLEOTIDE SEQUENCE [LARGE SCALE GENOMIC DNA]</scope>
    <source>
        <strain>AKU_12601</strain>
    </source>
</reference>